<sequence length="360" mass="40091">MLVWLAEYLVKFYSGFNVFSYLTFRAIVSLLTALFISLWMGPHLIAWLQKLQIGQVVRNDGPESHFSKRGTPTMGGLMILFSITISVLMWAYPSNPYVWCVLFILIGYGIVGFIDDYRKVVRKNTKGLIARWKYFWQSIIALAAAFTMYSIGKDTSATELVVPFFKDIMPQLGLLYVLLAYFVIVGTSNAVNLTDGLDGLAIMPTVFVAAGFALVAWATGNVNFAAYLHIPYLRHAGELVIVCTAIVGAGLGFLWFNTYPAQVFMGDVGSLALGGALGTIAVLLRQEFLLVIMGGVFVVETLSVILQVGSFKLRGQRIFRMAPIHHHYELKGWPEPRVIVRFWIISLMLVLIGLATLKLR</sequence>
<dbReference type="EC" id="2.7.8.13" evidence="1"/>
<dbReference type="EMBL" id="CP000901">
    <property type="protein sequence ID" value="ABX87455.1"/>
    <property type="molecule type" value="Genomic_DNA"/>
</dbReference>
<dbReference type="RefSeq" id="WP_012229822.1">
    <property type="nucleotide sequence ID" value="NC_010159.1"/>
</dbReference>
<dbReference type="SMR" id="A9R127"/>
<dbReference type="KEGG" id="ypg:YpAngola_A2921"/>
<dbReference type="PATRIC" id="fig|349746.12.peg.3964"/>
<dbReference type="UniPathway" id="UPA00219"/>
<dbReference type="GO" id="GO:0005886">
    <property type="term" value="C:plasma membrane"/>
    <property type="evidence" value="ECO:0007669"/>
    <property type="project" value="UniProtKB-SubCell"/>
</dbReference>
<dbReference type="GO" id="GO:0046872">
    <property type="term" value="F:metal ion binding"/>
    <property type="evidence" value="ECO:0007669"/>
    <property type="project" value="UniProtKB-KW"/>
</dbReference>
<dbReference type="GO" id="GO:0008963">
    <property type="term" value="F:phospho-N-acetylmuramoyl-pentapeptide-transferase activity"/>
    <property type="evidence" value="ECO:0007669"/>
    <property type="project" value="UniProtKB-UniRule"/>
</dbReference>
<dbReference type="GO" id="GO:0051992">
    <property type="term" value="F:UDP-N-acetylmuramoyl-L-alanyl-D-glutamyl-meso-2,6-diaminopimelyl-D-alanyl-D-alanine:undecaprenyl-phosphate transferase activity"/>
    <property type="evidence" value="ECO:0007669"/>
    <property type="project" value="RHEA"/>
</dbReference>
<dbReference type="GO" id="GO:0051301">
    <property type="term" value="P:cell division"/>
    <property type="evidence" value="ECO:0007669"/>
    <property type="project" value="UniProtKB-KW"/>
</dbReference>
<dbReference type="GO" id="GO:0071555">
    <property type="term" value="P:cell wall organization"/>
    <property type="evidence" value="ECO:0007669"/>
    <property type="project" value="UniProtKB-KW"/>
</dbReference>
<dbReference type="GO" id="GO:0009252">
    <property type="term" value="P:peptidoglycan biosynthetic process"/>
    <property type="evidence" value="ECO:0007669"/>
    <property type="project" value="UniProtKB-UniRule"/>
</dbReference>
<dbReference type="GO" id="GO:0008360">
    <property type="term" value="P:regulation of cell shape"/>
    <property type="evidence" value="ECO:0007669"/>
    <property type="project" value="UniProtKB-KW"/>
</dbReference>
<dbReference type="CDD" id="cd06852">
    <property type="entry name" value="GT_MraY"/>
    <property type="match status" value="1"/>
</dbReference>
<dbReference type="HAMAP" id="MF_00038">
    <property type="entry name" value="MraY"/>
    <property type="match status" value="1"/>
</dbReference>
<dbReference type="InterPro" id="IPR000715">
    <property type="entry name" value="Glycosyl_transferase_4"/>
</dbReference>
<dbReference type="InterPro" id="IPR003524">
    <property type="entry name" value="PNAcMuramoyl-5peptid_Trfase"/>
</dbReference>
<dbReference type="InterPro" id="IPR018480">
    <property type="entry name" value="PNAcMuramoyl-5peptid_Trfase_CS"/>
</dbReference>
<dbReference type="NCBIfam" id="TIGR00445">
    <property type="entry name" value="mraY"/>
    <property type="match status" value="1"/>
</dbReference>
<dbReference type="PANTHER" id="PTHR22926">
    <property type="entry name" value="PHOSPHO-N-ACETYLMURAMOYL-PENTAPEPTIDE-TRANSFERASE"/>
    <property type="match status" value="1"/>
</dbReference>
<dbReference type="PANTHER" id="PTHR22926:SF5">
    <property type="entry name" value="PHOSPHO-N-ACETYLMURAMOYL-PENTAPEPTIDE-TRANSFERASE HOMOLOG"/>
    <property type="match status" value="1"/>
</dbReference>
<dbReference type="Pfam" id="PF00953">
    <property type="entry name" value="Glycos_transf_4"/>
    <property type="match status" value="1"/>
</dbReference>
<dbReference type="Pfam" id="PF10555">
    <property type="entry name" value="MraY_sig1"/>
    <property type="match status" value="1"/>
</dbReference>
<dbReference type="PROSITE" id="PS01347">
    <property type="entry name" value="MRAY_1"/>
    <property type="match status" value="1"/>
</dbReference>
<dbReference type="PROSITE" id="PS01348">
    <property type="entry name" value="MRAY_2"/>
    <property type="match status" value="1"/>
</dbReference>
<reference key="1">
    <citation type="journal article" date="2010" name="J. Bacteriol.">
        <title>Genome sequence of the deep-rooted Yersinia pestis strain Angola reveals new insights into the evolution and pangenome of the plague bacterium.</title>
        <authorList>
            <person name="Eppinger M."/>
            <person name="Worsham P.L."/>
            <person name="Nikolich M.P."/>
            <person name="Riley D.R."/>
            <person name="Sebastian Y."/>
            <person name="Mou S."/>
            <person name="Achtman M."/>
            <person name="Lindler L.E."/>
            <person name="Ravel J."/>
        </authorList>
    </citation>
    <scope>NUCLEOTIDE SEQUENCE [LARGE SCALE GENOMIC DNA]</scope>
    <source>
        <strain>Angola</strain>
    </source>
</reference>
<proteinExistence type="inferred from homology"/>
<name>MRAY_YERPG</name>
<organism>
    <name type="scientific">Yersinia pestis bv. Antiqua (strain Angola)</name>
    <dbReference type="NCBI Taxonomy" id="349746"/>
    <lineage>
        <taxon>Bacteria</taxon>
        <taxon>Pseudomonadati</taxon>
        <taxon>Pseudomonadota</taxon>
        <taxon>Gammaproteobacteria</taxon>
        <taxon>Enterobacterales</taxon>
        <taxon>Yersiniaceae</taxon>
        <taxon>Yersinia</taxon>
    </lineage>
</organism>
<accession>A9R127</accession>
<feature type="chain" id="PRO_1000090693" description="Phospho-N-acetylmuramoyl-pentapeptide-transferase">
    <location>
        <begin position="1"/>
        <end position="360"/>
    </location>
</feature>
<feature type="transmembrane region" description="Helical" evidence="1">
    <location>
        <begin position="27"/>
        <end position="47"/>
    </location>
</feature>
<feature type="transmembrane region" description="Helical" evidence="1">
    <location>
        <begin position="72"/>
        <end position="92"/>
    </location>
</feature>
<feature type="transmembrane region" description="Helical" evidence="1">
    <location>
        <begin position="94"/>
        <end position="114"/>
    </location>
</feature>
<feature type="transmembrane region" description="Helical" evidence="1">
    <location>
        <begin position="132"/>
        <end position="152"/>
    </location>
</feature>
<feature type="transmembrane region" description="Helical" evidence="1">
    <location>
        <begin position="168"/>
        <end position="188"/>
    </location>
</feature>
<feature type="transmembrane region" description="Helical" evidence="1">
    <location>
        <begin position="199"/>
        <end position="219"/>
    </location>
</feature>
<feature type="transmembrane region" description="Helical" evidence="1">
    <location>
        <begin position="236"/>
        <end position="256"/>
    </location>
</feature>
<feature type="transmembrane region" description="Helical" evidence="1">
    <location>
        <begin position="263"/>
        <end position="283"/>
    </location>
</feature>
<feature type="transmembrane region" description="Helical" evidence="1">
    <location>
        <begin position="288"/>
        <end position="308"/>
    </location>
</feature>
<feature type="transmembrane region" description="Helical" evidence="1">
    <location>
        <begin position="338"/>
        <end position="358"/>
    </location>
</feature>
<comment type="function">
    <text evidence="1">Catalyzes the initial step of the lipid cycle reactions in the biosynthesis of the cell wall peptidoglycan: transfers peptidoglycan precursor phospho-MurNAc-pentapeptide from UDP-MurNAc-pentapeptide onto the lipid carrier undecaprenyl phosphate, yielding undecaprenyl-pyrophosphoryl-MurNAc-pentapeptide, known as lipid I.</text>
</comment>
<comment type="catalytic activity">
    <reaction evidence="1">
        <text>UDP-N-acetyl-alpha-D-muramoyl-L-alanyl-gamma-D-glutamyl-meso-2,6-diaminopimeloyl-D-alanyl-D-alanine + di-trans,octa-cis-undecaprenyl phosphate = di-trans,octa-cis-undecaprenyl diphospho-N-acetyl-alpha-D-muramoyl-L-alanyl-D-glutamyl-meso-2,6-diaminopimeloyl-D-alanyl-D-alanine + UMP</text>
        <dbReference type="Rhea" id="RHEA:28386"/>
        <dbReference type="ChEBI" id="CHEBI:57865"/>
        <dbReference type="ChEBI" id="CHEBI:60392"/>
        <dbReference type="ChEBI" id="CHEBI:61386"/>
        <dbReference type="ChEBI" id="CHEBI:61387"/>
        <dbReference type="EC" id="2.7.8.13"/>
    </reaction>
</comment>
<comment type="cofactor">
    <cofactor evidence="1">
        <name>Mg(2+)</name>
        <dbReference type="ChEBI" id="CHEBI:18420"/>
    </cofactor>
</comment>
<comment type="pathway">
    <text evidence="1">Cell wall biogenesis; peptidoglycan biosynthesis.</text>
</comment>
<comment type="subcellular location">
    <subcellularLocation>
        <location evidence="1">Cell inner membrane</location>
        <topology evidence="1">Multi-pass membrane protein</topology>
    </subcellularLocation>
</comment>
<comment type="similarity">
    <text evidence="1">Belongs to the glycosyltransferase 4 family. MraY subfamily.</text>
</comment>
<protein>
    <recommendedName>
        <fullName evidence="1">Phospho-N-acetylmuramoyl-pentapeptide-transferase</fullName>
        <ecNumber evidence="1">2.7.8.13</ecNumber>
    </recommendedName>
    <alternativeName>
        <fullName evidence="1">UDP-MurNAc-pentapeptide phosphotransferase</fullName>
    </alternativeName>
</protein>
<gene>
    <name evidence="1" type="primary">mraY</name>
    <name type="ordered locus">YpAngola_A2921</name>
</gene>
<keyword id="KW-0131">Cell cycle</keyword>
<keyword id="KW-0132">Cell division</keyword>
<keyword id="KW-0997">Cell inner membrane</keyword>
<keyword id="KW-1003">Cell membrane</keyword>
<keyword id="KW-0133">Cell shape</keyword>
<keyword id="KW-0961">Cell wall biogenesis/degradation</keyword>
<keyword id="KW-0460">Magnesium</keyword>
<keyword id="KW-0472">Membrane</keyword>
<keyword id="KW-0479">Metal-binding</keyword>
<keyword id="KW-0573">Peptidoglycan synthesis</keyword>
<keyword id="KW-0808">Transferase</keyword>
<keyword id="KW-0812">Transmembrane</keyword>
<keyword id="KW-1133">Transmembrane helix</keyword>
<evidence type="ECO:0000255" key="1">
    <source>
        <dbReference type="HAMAP-Rule" id="MF_00038"/>
    </source>
</evidence>